<protein>
    <recommendedName>
        <fullName evidence="1">Large ribosomal subunit protein bL21</fullName>
    </recommendedName>
    <alternativeName>
        <fullName evidence="2">50S ribosomal protein L21</fullName>
    </alternativeName>
</protein>
<name>RL21_BACVZ</name>
<sequence length="102" mass="11204">MYAIIKTGGKQIKVEEGQTVYIEKLAAEAGETVTFEDVLFVGGDSVKVGNPTVAGATVTAKVEKQGRAKKITVFRYKPKKNVHKKQGHRQPYTKLTIEKINA</sequence>
<organism>
    <name type="scientific">Bacillus velezensis (strain DSM 23117 / BGSC 10A6 / LMG 26770 / FZB42)</name>
    <name type="common">Bacillus amyloliquefaciens subsp. plantarum</name>
    <dbReference type="NCBI Taxonomy" id="326423"/>
    <lineage>
        <taxon>Bacteria</taxon>
        <taxon>Bacillati</taxon>
        <taxon>Bacillota</taxon>
        <taxon>Bacilli</taxon>
        <taxon>Bacillales</taxon>
        <taxon>Bacillaceae</taxon>
        <taxon>Bacillus</taxon>
        <taxon>Bacillus amyloliquefaciens group</taxon>
    </lineage>
</organism>
<reference key="1">
    <citation type="journal article" date="2007" name="Nat. Biotechnol.">
        <title>Comparative analysis of the complete genome sequence of the plant growth-promoting bacterium Bacillus amyloliquefaciens FZB42.</title>
        <authorList>
            <person name="Chen X.H."/>
            <person name="Koumoutsi A."/>
            <person name="Scholz R."/>
            <person name="Eisenreich A."/>
            <person name="Schneider K."/>
            <person name="Heinemeyer I."/>
            <person name="Morgenstern B."/>
            <person name="Voss B."/>
            <person name="Hess W.R."/>
            <person name="Reva O."/>
            <person name="Junge H."/>
            <person name="Voigt B."/>
            <person name="Jungblut P.R."/>
            <person name="Vater J."/>
            <person name="Suessmuth R."/>
            <person name="Liesegang H."/>
            <person name="Strittmatter A."/>
            <person name="Gottschalk G."/>
            <person name="Borriss R."/>
        </authorList>
    </citation>
    <scope>NUCLEOTIDE SEQUENCE [LARGE SCALE GENOMIC DNA]</scope>
    <source>
        <strain>DSM 23117 / BGSC 10A6 / LMG 26770 / FZB42</strain>
    </source>
</reference>
<accession>A7Z785</accession>
<feature type="chain" id="PRO_1000067802" description="Large ribosomal subunit protein bL21">
    <location>
        <begin position="1"/>
        <end position="102"/>
    </location>
</feature>
<gene>
    <name evidence="1" type="primary">rplU</name>
    <name type="ordered locus">RBAM_025010</name>
</gene>
<proteinExistence type="inferred from homology"/>
<comment type="function">
    <text evidence="1">This protein binds to 23S rRNA in the presence of protein L20.</text>
</comment>
<comment type="subunit">
    <text evidence="1">Part of the 50S ribosomal subunit. Contacts protein L20.</text>
</comment>
<comment type="similarity">
    <text evidence="1">Belongs to the bacterial ribosomal protein bL21 family.</text>
</comment>
<dbReference type="EMBL" id="CP000560">
    <property type="protein sequence ID" value="ABS74861.1"/>
    <property type="molecule type" value="Genomic_DNA"/>
</dbReference>
<dbReference type="RefSeq" id="WP_003152660.1">
    <property type="nucleotide sequence ID" value="NC_009725.2"/>
</dbReference>
<dbReference type="SMR" id="A7Z785"/>
<dbReference type="GeneID" id="93081643"/>
<dbReference type="KEGG" id="bay:RBAM_025010"/>
<dbReference type="HOGENOM" id="CLU_061463_3_2_9"/>
<dbReference type="Proteomes" id="UP000001120">
    <property type="component" value="Chromosome"/>
</dbReference>
<dbReference type="GO" id="GO:0005737">
    <property type="term" value="C:cytoplasm"/>
    <property type="evidence" value="ECO:0007669"/>
    <property type="project" value="UniProtKB-ARBA"/>
</dbReference>
<dbReference type="GO" id="GO:1990904">
    <property type="term" value="C:ribonucleoprotein complex"/>
    <property type="evidence" value="ECO:0007669"/>
    <property type="project" value="UniProtKB-KW"/>
</dbReference>
<dbReference type="GO" id="GO:0005840">
    <property type="term" value="C:ribosome"/>
    <property type="evidence" value="ECO:0007669"/>
    <property type="project" value="UniProtKB-KW"/>
</dbReference>
<dbReference type="GO" id="GO:0019843">
    <property type="term" value="F:rRNA binding"/>
    <property type="evidence" value="ECO:0007669"/>
    <property type="project" value="UniProtKB-UniRule"/>
</dbReference>
<dbReference type="GO" id="GO:0003735">
    <property type="term" value="F:structural constituent of ribosome"/>
    <property type="evidence" value="ECO:0007669"/>
    <property type="project" value="InterPro"/>
</dbReference>
<dbReference type="GO" id="GO:0006412">
    <property type="term" value="P:translation"/>
    <property type="evidence" value="ECO:0007669"/>
    <property type="project" value="UniProtKB-UniRule"/>
</dbReference>
<dbReference type="HAMAP" id="MF_01363">
    <property type="entry name" value="Ribosomal_bL21"/>
    <property type="match status" value="1"/>
</dbReference>
<dbReference type="InterPro" id="IPR028909">
    <property type="entry name" value="bL21-like"/>
</dbReference>
<dbReference type="InterPro" id="IPR036164">
    <property type="entry name" value="bL21-like_sf"/>
</dbReference>
<dbReference type="InterPro" id="IPR001787">
    <property type="entry name" value="Ribosomal_bL21"/>
</dbReference>
<dbReference type="InterPro" id="IPR018258">
    <property type="entry name" value="Ribosomal_bL21_CS"/>
</dbReference>
<dbReference type="NCBIfam" id="TIGR00061">
    <property type="entry name" value="L21"/>
    <property type="match status" value="1"/>
</dbReference>
<dbReference type="PANTHER" id="PTHR21349">
    <property type="entry name" value="50S RIBOSOMAL PROTEIN L21"/>
    <property type="match status" value="1"/>
</dbReference>
<dbReference type="PANTHER" id="PTHR21349:SF0">
    <property type="entry name" value="LARGE RIBOSOMAL SUBUNIT PROTEIN BL21M"/>
    <property type="match status" value="1"/>
</dbReference>
<dbReference type="Pfam" id="PF00829">
    <property type="entry name" value="Ribosomal_L21p"/>
    <property type="match status" value="1"/>
</dbReference>
<dbReference type="SUPFAM" id="SSF141091">
    <property type="entry name" value="L21p-like"/>
    <property type="match status" value="1"/>
</dbReference>
<dbReference type="PROSITE" id="PS01169">
    <property type="entry name" value="RIBOSOMAL_L21"/>
    <property type="match status" value="1"/>
</dbReference>
<keyword id="KW-0687">Ribonucleoprotein</keyword>
<keyword id="KW-0689">Ribosomal protein</keyword>
<keyword id="KW-0694">RNA-binding</keyword>
<keyword id="KW-0699">rRNA-binding</keyword>
<evidence type="ECO:0000255" key="1">
    <source>
        <dbReference type="HAMAP-Rule" id="MF_01363"/>
    </source>
</evidence>
<evidence type="ECO:0000305" key="2"/>